<organism>
    <name type="scientific">Arabidopsis thaliana</name>
    <name type="common">Mouse-ear cress</name>
    <dbReference type="NCBI Taxonomy" id="3702"/>
    <lineage>
        <taxon>Eukaryota</taxon>
        <taxon>Viridiplantae</taxon>
        <taxon>Streptophyta</taxon>
        <taxon>Embryophyta</taxon>
        <taxon>Tracheophyta</taxon>
        <taxon>Spermatophyta</taxon>
        <taxon>Magnoliopsida</taxon>
        <taxon>eudicotyledons</taxon>
        <taxon>Gunneridae</taxon>
        <taxon>Pentapetalae</taxon>
        <taxon>rosids</taxon>
        <taxon>malvids</taxon>
        <taxon>Brassicales</taxon>
        <taxon>Brassicaceae</taxon>
        <taxon>Camelineae</taxon>
        <taxon>Arabidopsis</taxon>
    </lineage>
</organism>
<name>WIH1_ARATH</name>
<feature type="chain" id="PRO_0000440182" description="Protein CYSTEINE-RICH TRANSMEMBRANE MODULE 13">
    <location>
        <begin position="1"/>
        <end position="82"/>
    </location>
</feature>
<feature type="transmembrane region" description="Helical" evidence="1">
    <location>
        <begin position="59"/>
        <end position="76"/>
    </location>
</feature>
<feature type="region of interest" description="Disordered" evidence="2">
    <location>
        <begin position="1"/>
        <end position="58"/>
    </location>
</feature>
<feature type="compositionally biased region" description="Pro residues" evidence="2">
    <location>
        <begin position="26"/>
        <end position="37"/>
    </location>
</feature>
<feature type="sequence conflict" description="In Ref. 4; AAM67217." evidence="7" ref="4">
    <original>C</original>
    <variation>F</variation>
    <location>
        <position position="75"/>
    </location>
</feature>
<gene>
    <name evidence="5" type="primary">WIH1</name>
    <name evidence="6" type="synonym">CYSTM13</name>
    <name evidence="8" type="ordered locus">At5g67600</name>
    <name evidence="9" type="ORF">K9I9.17</name>
</gene>
<keyword id="KW-1003">Cell membrane</keyword>
<keyword id="KW-0472">Membrane</keyword>
<keyword id="KW-1185">Reference proteome</keyword>
<keyword id="KW-0812">Transmembrane</keyword>
<keyword id="KW-1133">Transmembrane helix</keyword>
<protein>
    <recommendedName>
        <fullName evidence="6">Protein CYSTEINE-RICH TRANSMEMBRANE MODULE 13</fullName>
        <shortName evidence="6">AthCYSTM13</shortName>
    </recommendedName>
    <alternativeName>
        <fullName evidence="7">Cysteine-rich and transmembrane domain-containing protein WIH1</fullName>
    </alternativeName>
    <alternativeName>
        <fullName evidence="5">Protein WINDHOSE 1</fullName>
    </alternativeName>
</protein>
<accession>Q9FJW3</accession>
<accession>Q8L8M2</accession>
<evidence type="ECO:0000255" key="1"/>
<evidence type="ECO:0000256" key="2">
    <source>
        <dbReference type="SAM" id="MobiDB-lite"/>
    </source>
</evidence>
<evidence type="ECO:0000269" key="3">
    <source>
    </source>
</evidence>
<evidence type="ECO:0000269" key="4">
    <source>
    </source>
</evidence>
<evidence type="ECO:0000303" key="5">
    <source>
    </source>
</evidence>
<evidence type="ECO:0000303" key="6">
    <source>
    </source>
</evidence>
<evidence type="ECO:0000305" key="7"/>
<evidence type="ECO:0000312" key="8">
    <source>
        <dbReference type="Araport" id="AT5G67600"/>
    </source>
</evidence>
<evidence type="ECO:0000312" key="9">
    <source>
        <dbReference type="EMBL" id="BAB08468.1"/>
    </source>
</evidence>
<proteinExistence type="evidence at protein level"/>
<comment type="function">
    <text evidence="3 6">Required for the promotion of megasporogenesis, or promotion of germ cell formation from somatic precursor cells. Acts redundantly with WIH2. Functions in a genetic pathway downstream of SPL/NZZ and WUS and together with TRN2 in promoting megasporogenesis (PubMed:21658947). Involved in resistance to abiotic stress (PubMed:29272523).</text>
</comment>
<comment type="subunit">
    <text evidence="4">Homodimer and heterodimers (PubMed:29272523). Interacts with CYSTM7, CYTSM3, CYTSM4, CYTSM5, CYTSM6, CYTSM9, CYTSM10 and CYTSM11 (PubMed:29272523). Binds weakly to CYSTM1 and CYSTM2 (PubMed:29272523).</text>
</comment>
<comment type="subcellular location">
    <subcellularLocation>
        <location evidence="4">Cell membrane</location>
        <topology evidence="1">Single-pass membrane protein</topology>
    </subcellularLocation>
</comment>
<comment type="tissue specificity">
    <text evidence="3 4">Expressed in root meristem, root vasculature, leaf vasculature and floral organ primordia (PubMed:21658947). Mostly expressed in roots and flowers and, to a lower extent, in stems, siliques and leaves (PubMed:29272523).</text>
</comment>
<comment type="developmental stage">
    <text evidence="3">During ovule development, expressed in the nucellus from early stage until embryo sac maturity.</text>
</comment>
<comment type="induction">
    <text evidence="4">Induced by heat in roots.</text>
</comment>
<comment type="disruption phenotype">
    <text evidence="3">No visible phenotype under normal growth conditions, but flowers of the double mutants wih1-1 and wih2-1 have defect in megasporgogenesis. Doubl mutant plants display retarded growth, and twisted leaves, siliques and roots.</text>
</comment>
<comment type="similarity">
    <text evidence="7">Belongs to the CYSTM1 family.</text>
</comment>
<dbReference type="EMBL" id="AB013390">
    <property type="protein sequence ID" value="BAB08468.1"/>
    <property type="molecule type" value="Genomic_DNA"/>
</dbReference>
<dbReference type="EMBL" id="CP002688">
    <property type="protein sequence ID" value="AED98365.1"/>
    <property type="molecule type" value="Genomic_DNA"/>
</dbReference>
<dbReference type="EMBL" id="AY040021">
    <property type="protein sequence ID" value="AAK64178.1"/>
    <property type="molecule type" value="mRNA"/>
</dbReference>
<dbReference type="EMBL" id="AY114014">
    <property type="protein sequence ID" value="AAM45062.1"/>
    <property type="molecule type" value="mRNA"/>
</dbReference>
<dbReference type="EMBL" id="AY088911">
    <property type="protein sequence ID" value="AAM67217.1"/>
    <property type="molecule type" value="mRNA"/>
</dbReference>
<dbReference type="RefSeq" id="NP_569052.1">
    <property type="nucleotide sequence ID" value="NM_126160.4"/>
</dbReference>
<dbReference type="FunCoup" id="Q9FJW3">
    <property type="interactions" value="213"/>
</dbReference>
<dbReference type="STRING" id="3702.Q9FJW3"/>
<dbReference type="PaxDb" id="3702-AT5G67600.1"/>
<dbReference type="ProteomicsDB" id="242549"/>
<dbReference type="EnsemblPlants" id="AT5G67600.1">
    <property type="protein sequence ID" value="AT5G67600.1"/>
    <property type="gene ID" value="AT5G67600"/>
</dbReference>
<dbReference type="GeneID" id="836896"/>
<dbReference type="Gramene" id="AT5G67600.1">
    <property type="protein sequence ID" value="AT5G67600.1"/>
    <property type="gene ID" value="AT5G67600"/>
</dbReference>
<dbReference type="KEGG" id="ath:AT5G67600"/>
<dbReference type="Araport" id="AT5G67600"/>
<dbReference type="TAIR" id="AT5G67600">
    <property type="gene designation" value="WIH1"/>
</dbReference>
<dbReference type="eggNOG" id="ENOG502S205">
    <property type="taxonomic scope" value="Eukaryota"/>
</dbReference>
<dbReference type="HOGENOM" id="CLU_128451_1_0_1"/>
<dbReference type="InParanoid" id="Q9FJW3"/>
<dbReference type="OMA" id="GAMACCC"/>
<dbReference type="PRO" id="PR:Q9FJW3"/>
<dbReference type="Proteomes" id="UP000006548">
    <property type="component" value="Chromosome 5"/>
</dbReference>
<dbReference type="ExpressionAtlas" id="Q9FJW3">
    <property type="expression patterns" value="baseline and differential"/>
</dbReference>
<dbReference type="GO" id="GO:0005886">
    <property type="term" value="C:plasma membrane"/>
    <property type="evidence" value="ECO:0000314"/>
    <property type="project" value="UniProtKB"/>
</dbReference>
<dbReference type="GO" id="GO:0042803">
    <property type="term" value="F:protein homodimerization activity"/>
    <property type="evidence" value="ECO:0000314"/>
    <property type="project" value="UniProtKB"/>
</dbReference>
<dbReference type="GO" id="GO:0009554">
    <property type="term" value="P:megasporogenesis"/>
    <property type="evidence" value="ECO:0000316"/>
    <property type="project" value="TAIR"/>
</dbReference>
<dbReference type="InterPro" id="IPR028144">
    <property type="entry name" value="CYSTM_dom"/>
</dbReference>
<dbReference type="InterPro" id="IPR044850">
    <property type="entry name" value="WIH1-like"/>
</dbReference>
<dbReference type="PANTHER" id="PTHR31568:SF123">
    <property type="entry name" value="PROTEIN CYSTEINE-RICH TRANSMEMBRANE MODULE 13"/>
    <property type="match status" value="1"/>
</dbReference>
<dbReference type="PANTHER" id="PTHR31568">
    <property type="entry name" value="RCG49325, ISOFORM CRA_A"/>
    <property type="match status" value="1"/>
</dbReference>
<dbReference type="Pfam" id="PF12734">
    <property type="entry name" value="CYSTM"/>
    <property type="match status" value="1"/>
</dbReference>
<sequence length="82" mass="8711">MYHQEQHPVGAPPPQGYPPKDGYPPAGYPPAGYPPPGYAQGYPAQGYPPPQYSQAPQQKQNAGMLEGCLAALCCCCLLDACF</sequence>
<reference key="1">
    <citation type="journal article" date="1998" name="DNA Res.">
        <title>Structural analysis of Arabidopsis thaliana chromosome 5. VI. Sequence features of the regions of 1,367,185 bp covered by 19 physically assigned P1 and TAC clones.</title>
        <authorList>
            <person name="Kotani H."/>
            <person name="Nakamura Y."/>
            <person name="Sato S."/>
            <person name="Asamizu E."/>
            <person name="Kaneko T."/>
            <person name="Miyajima N."/>
            <person name="Tabata S."/>
        </authorList>
    </citation>
    <scope>NUCLEOTIDE SEQUENCE [LARGE SCALE GENOMIC DNA]</scope>
    <source>
        <strain>cv. Columbia</strain>
    </source>
</reference>
<reference key="2">
    <citation type="journal article" date="2017" name="Plant J.">
        <title>Araport11: a complete reannotation of the Arabidopsis thaliana reference genome.</title>
        <authorList>
            <person name="Cheng C.Y."/>
            <person name="Krishnakumar V."/>
            <person name="Chan A.P."/>
            <person name="Thibaud-Nissen F."/>
            <person name="Schobel S."/>
            <person name="Town C.D."/>
        </authorList>
    </citation>
    <scope>GENOME REANNOTATION</scope>
    <source>
        <strain>cv. Columbia</strain>
    </source>
</reference>
<reference key="3">
    <citation type="journal article" date="2003" name="Science">
        <title>Empirical analysis of transcriptional activity in the Arabidopsis genome.</title>
        <authorList>
            <person name="Yamada K."/>
            <person name="Lim J."/>
            <person name="Dale J.M."/>
            <person name="Chen H."/>
            <person name="Shinn P."/>
            <person name="Palm C.J."/>
            <person name="Southwick A.M."/>
            <person name="Wu H.C."/>
            <person name="Kim C.J."/>
            <person name="Nguyen M."/>
            <person name="Pham P.K."/>
            <person name="Cheuk R.F."/>
            <person name="Karlin-Newmann G."/>
            <person name="Liu S.X."/>
            <person name="Lam B."/>
            <person name="Sakano H."/>
            <person name="Wu T."/>
            <person name="Yu G."/>
            <person name="Miranda M."/>
            <person name="Quach H.L."/>
            <person name="Tripp M."/>
            <person name="Chang C.H."/>
            <person name="Lee J.M."/>
            <person name="Toriumi M.J."/>
            <person name="Chan M.M."/>
            <person name="Tang C.C."/>
            <person name="Onodera C.S."/>
            <person name="Deng J.M."/>
            <person name="Akiyama K."/>
            <person name="Ansari Y."/>
            <person name="Arakawa T."/>
            <person name="Banh J."/>
            <person name="Banno F."/>
            <person name="Bowser L."/>
            <person name="Brooks S.Y."/>
            <person name="Carninci P."/>
            <person name="Chao Q."/>
            <person name="Choy N."/>
            <person name="Enju A."/>
            <person name="Goldsmith A.D."/>
            <person name="Gurjal M."/>
            <person name="Hansen N.F."/>
            <person name="Hayashizaki Y."/>
            <person name="Johnson-Hopson C."/>
            <person name="Hsuan V.W."/>
            <person name="Iida K."/>
            <person name="Karnes M."/>
            <person name="Khan S."/>
            <person name="Koesema E."/>
            <person name="Ishida J."/>
            <person name="Jiang P.X."/>
            <person name="Jones T."/>
            <person name="Kawai J."/>
            <person name="Kamiya A."/>
            <person name="Meyers C."/>
            <person name="Nakajima M."/>
            <person name="Narusaka M."/>
            <person name="Seki M."/>
            <person name="Sakurai T."/>
            <person name="Satou M."/>
            <person name="Tamse R."/>
            <person name="Vaysberg M."/>
            <person name="Wallender E.K."/>
            <person name="Wong C."/>
            <person name="Yamamura Y."/>
            <person name="Yuan S."/>
            <person name="Shinozaki K."/>
            <person name="Davis R.W."/>
            <person name="Theologis A."/>
            <person name="Ecker J.R."/>
        </authorList>
    </citation>
    <scope>NUCLEOTIDE SEQUENCE [LARGE SCALE MRNA]</scope>
    <source>
        <strain>cv. Columbia</strain>
    </source>
</reference>
<reference key="4">
    <citation type="submission" date="2002-03" db="EMBL/GenBank/DDBJ databases">
        <title>Full-length cDNA from Arabidopsis thaliana.</title>
        <authorList>
            <person name="Brover V.V."/>
            <person name="Troukhan M.E."/>
            <person name="Alexandrov N.A."/>
            <person name="Lu Y.-P."/>
            <person name="Flavell R.B."/>
            <person name="Feldmann K.A."/>
        </authorList>
    </citation>
    <scope>NUCLEOTIDE SEQUENCE [LARGE SCALE MRNA]</scope>
</reference>
<reference key="5">
    <citation type="journal article" date="2011" name="Curr. Biol.">
        <title>Arabidopsis WIH1 and WIH2 genes act in the transition from somatic to reproductive cell fate.</title>
        <authorList>
            <person name="Lieber D."/>
            <person name="Lora J."/>
            <person name="Schrempp S."/>
            <person name="Lenhard M."/>
            <person name="Laux T."/>
        </authorList>
    </citation>
    <scope>FUNCTION</scope>
    <scope>TISSUE SPECIFICITY</scope>
    <scope>DEVELOPMENTAL STAGE</scope>
    <scope>DISRUPTION PHENOTYPE</scope>
</reference>
<reference key="6">
    <citation type="journal article" date="2018" name="Plant Cell Physiol.">
        <title>CYSTM, a novel non-secreted cysteine-rich peptide family, involved in environmental stresses in Arabidopsis thaliana.</title>
        <authorList>
            <person name="Xu Y."/>
            <person name="Yu Z."/>
            <person name="Zhang D."/>
            <person name="Huang J."/>
            <person name="Wu C."/>
            <person name="Yang G."/>
            <person name="Yan K."/>
            <person name="Zhang S."/>
            <person name="Zheng C."/>
        </authorList>
    </citation>
    <scope>FUNCTION</scope>
    <scope>HOMODIMERIZATION</scope>
    <scope>INTERACTION WITH CYSTM7; CYTSM3; CYTSM4; CYTSM5; CYTSM6; CYTSM9; CYTSM10; CYTSM11; CYSTM1 AND CYSTM2</scope>
    <scope>TISSUE SPECIFICITY</scope>
    <scope>INDUCTION BY HEAT</scope>
    <scope>SUBCELLULAR LOCATION</scope>
    <source>
        <strain>cv. Columbia</strain>
    </source>
</reference>